<accession>A7H4F3</accession>
<gene>
    <name evidence="1" type="primary">era</name>
    <name type="ordered locus">JJD26997_1338</name>
</gene>
<comment type="function">
    <text evidence="1">An essential GTPase that binds both GDP and GTP, with rapid nucleotide exchange. Plays a role in 16S rRNA processing and 30S ribosomal subunit biogenesis and possibly also in cell cycle regulation and energy metabolism.</text>
</comment>
<comment type="subunit">
    <text evidence="1">Monomer.</text>
</comment>
<comment type="subcellular location">
    <subcellularLocation>
        <location>Cytoplasm</location>
    </subcellularLocation>
    <subcellularLocation>
        <location evidence="1">Cell inner membrane</location>
        <topology evidence="1">Peripheral membrane protein</topology>
    </subcellularLocation>
</comment>
<comment type="similarity">
    <text evidence="1 2">Belongs to the TRAFAC class TrmE-Era-EngA-EngB-Septin-like GTPase superfamily. Era GTPase family.</text>
</comment>
<feature type="chain" id="PRO_1000079667" description="GTPase Era">
    <location>
        <begin position="1"/>
        <end position="291"/>
    </location>
</feature>
<feature type="domain" description="Era-type G" evidence="2">
    <location>
        <begin position="2"/>
        <end position="167"/>
    </location>
</feature>
<feature type="domain" description="KH type-2" evidence="1">
    <location>
        <begin position="186"/>
        <end position="274"/>
    </location>
</feature>
<feature type="region of interest" description="G1" evidence="2">
    <location>
        <begin position="10"/>
        <end position="17"/>
    </location>
</feature>
<feature type="region of interest" description="G2" evidence="2">
    <location>
        <begin position="36"/>
        <end position="40"/>
    </location>
</feature>
<feature type="region of interest" description="G3" evidence="2">
    <location>
        <begin position="57"/>
        <end position="60"/>
    </location>
</feature>
<feature type="region of interest" description="G4" evidence="2">
    <location>
        <begin position="116"/>
        <end position="119"/>
    </location>
</feature>
<feature type="region of interest" description="G5" evidence="2">
    <location>
        <begin position="146"/>
        <end position="148"/>
    </location>
</feature>
<feature type="binding site" evidence="1">
    <location>
        <begin position="10"/>
        <end position="17"/>
    </location>
    <ligand>
        <name>GTP</name>
        <dbReference type="ChEBI" id="CHEBI:37565"/>
    </ligand>
</feature>
<feature type="binding site" evidence="1">
    <location>
        <begin position="57"/>
        <end position="61"/>
    </location>
    <ligand>
        <name>GTP</name>
        <dbReference type="ChEBI" id="CHEBI:37565"/>
    </ligand>
</feature>
<feature type="binding site" evidence="1">
    <location>
        <begin position="116"/>
        <end position="119"/>
    </location>
    <ligand>
        <name>GTP</name>
        <dbReference type="ChEBI" id="CHEBI:37565"/>
    </ligand>
</feature>
<keyword id="KW-0997">Cell inner membrane</keyword>
<keyword id="KW-1003">Cell membrane</keyword>
<keyword id="KW-0963">Cytoplasm</keyword>
<keyword id="KW-0342">GTP-binding</keyword>
<keyword id="KW-0472">Membrane</keyword>
<keyword id="KW-0547">Nucleotide-binding</keyword>
<keyword id="KW-0690">Ribosome biogenesis</keyword>
<keyword id="KW-0694">RNA-binding</keyword>
<keyword id="KW-0699">rRNA-binding</keyword>
<reference key="1">
    <citation type="submission" date="2007-07" db="EMBL/GenBank/DDBJ databases">
        <title>Complete genome sequence of Campylobacter jejuni subsp doylei 269.97 isolated from human blood.</title>
        <authorList>
            <person name="Fouts D.E."/>
            <person name="Mongodin E.F."/>
            <person name="Puiu D."/>
            <person name="Sebastian Y."/>
            <person name="Miller W.G."/>
            <person name="Mandrell R.E."/>
            <person name="Lastovica A.J."/>
            <person name="Nelson K.E."/>
        </authorList>
    </citation>
    <scope>NUCLEOTIDE SEQUENCE [LARGE SCALE GENOMIC DNA]</scope>
    <source>
        <strain>ATCC BAA-1458 / RM4099 / 269.97</strain>
    </source>
</reference>
<protein>
    <recommendedName>
        <fullName evidence="1">GTPase Era</fullName>
    </recommendedName>
</protein>
<sequence>MKSGFVSIIGRTNAGKSTLINSLLEEKIALVSHKQNATRRKIKAIVIHEKNQIIFIDTPGLHESGATFNQLLVQSAIKSMEDCDVILFVASVFDSTKDYENFLSLNPQVSHIIALNKVDLTDNATLLKKLSEYAKFSEHFKAILPYSSKKKSYKKGLLDEIVKCLNEHEYFYDPEFLSVNSEKELYRDFILESIYENLSDELPYSSEVLINRTKDTPNLLILEANIITDTNSHKGMFIGKEGATLKRIGKDARFKISKLAQKKVLLKLFVTVKKNWQKDEEFLKKLLNDEN</sequence>
<proteinExistence type="inferred from homology"/>
<name>ERA_CAMJD</name>
<evidence type="ECO:0000255" key="1">
    <source>
        <dbReference type="HAMAP-Rule" id="MF_00367"/>
    </source>
</evidence>
<evidence type="ECO:0000255" key="2">
    <source>
        <dbReference type="PROSITE-ProRule" id="PRU01050"/>
    </source>
</evidence>
<dbReference type="EMBL" id="CP000768">
    <property type="protein sequence ID" value="ABS43316.1"/>
    <property type="molecule type" value="Genomic_DNA"/>
</dbReference>
<dbReference type="SMR" id="A7H4F3"/>
<dbReference type="KEGG" id="cjd:JJD26997_1338"/>
<dbReference type="HOGENOM" id="CLU_038009_1_0_7"/>
<dbReference type="Proteomes" id="UP000002302">
    <property type="component" value="Chromosome"/>
</dbReference>
<dbReference type="GO" id="GO:0005829">
    <property type="term" value="C:cytosol"/>
    <property type="evidence" value="ECO:0007669"/>
    <property type="project" value="TreeGrafter"/>
</dbReference>
<dbReference type="GO" id="GO:0005886">
    <property type="term" value="C:plasma membrane"/>
    <property type="evidence" value="ECO:0007669"/>
    <property type="project" value="UniProtKB-SubCell"/>
</dbReference>
<dbReference type="GO" id="GO:0005525">
    <property type="term" value="F:GTP binding"/>
    <property type="evidence" value="ECO:0007669"/>
    <property type="project" value="UniProtKB-UniRule"/>
</dbReference>
<dbReference type="GO" id="GO:0003924">
    <property type="term" value="F:GTPase activity"/>
    <property type="evidence" value="ECO:0007669"/>
    <property type="project" value="UniProtKB-UniRule"/>
</dbReference>
<dbReference type="GO" id="GO:0043024">
    <property type="term" value="F:ribosomal small subunit binding"/>
    <property type="evidence" value="ECO:0007669"/>
    <property type="project" value="TreeGrafter"/>
</dbReference>
<dbReference type="GO" id="GO:0070181">
    <property type="term" value="F:small ribosomal subunit rRNA binding"/>
    <property type="evidence" value="ECO:0007669"/>
    <property type="project" value="UniProtKB-UniRule"/>
</dbReference>
<dbReference type="GO" id="GO:0000028">
    <property type="term" value="P:ribosomal small subunit assembly"/>
    <property type="evidence" value="ECO:0007669"/>
    <property type="project" value="TreeGrafter"/>
</dbReference>
<dbReference type="CDD" id="cd04163">
    <property type="entry name" value="Era"/>
    <property type="match status" value="1"/>
</dbReference>
<dbReference type="CDD" id="cd22534">
    <property type="entry name" value="KH-II_Era"/>
    <property type="match status" value="1"/>
</dbReference>
<dbReference type="Gene3D" id="3.30.300.20">
    <property type="match status" value="1"/>
</dbReference>
<dbReference type="Gene3D" id="3.40.50.300">
    <property type="entry name" value="P-loop containing nucleotide triphosphate hydrolases"/>
    <property type="match status" value="1"/>
</dbReference>
<dbReference type="HAMAP" id="MF_00367">
    <property type="entry name" value="GTPase_Era"/>
    <property type="match status" value="1"/>
</dbReference>
<dbReference type="InterPro" id="IPR030388">
    <property type="entry name" value="G_ERA_dom"/>
</dbReference>
<dbReference type="InterPro" id="IPR006073">
    <property type="entry name" value="GTP-bd"/>
</dbReference>
<dbReference type="InterPro" id="IPR005662">
    <property type="entry name" value="GTPase_Era-like"/>
</dbReference>
<dbReference type="InterPro" id="IPR015946">
    <property type="entry name" value="KH_dom-like_a/b"/>
</dbReference>
<dbReference type="InterPro" id="IPR004044">
    <property type="entry name" value="KH_dom_type_2"/>
</dbReference>
<dbReference type="InterPro" id="IPR009019">
    <property type="entry name" value="KH_sf_prok-type"/>
</dbReference>
<dbReference type="InterPro" id="IPR027417">
    <property type="entry name" value="P-loop_NTPase"/>
</dbReference>
<dbReference type="InterPro" id="IPR005225">
    <property type="entry name" value="Small_GTP-bd"/>
</dbReference>
<dbReference type="NCBIfam" id="TIGR00436">
    <property type="entry name" value="era"/>
    <property type="match status" value="1"/>
</dbReference>
<dbReference type="NCBIfam" id="NF000908">
    <property type="entry name" value="PRK00089.1"/>
    <property type="match status" value="1"/>
</dbReference>
<dbReference type="NCBIfam" id="TIGR00231">
    <property type="entry name" value="small_GTP"/>
    <property type="match status" value="1"/>
</dbReference>
<dbReference type="PANTHER" id="PTHR42698">
    <property type="entry name" value="GTPASE ERA"/>
    <property type="match status" value="1"/>
</dbReference>
<dbReference type="PANTHER" id="PTHR42698:SF1">
    <property type="entry name" value="GTPASE ERA, MITOCHONDRIAL"/>
    <property type="match status" value="1"/>
</dbReference>
<dbReference type="Pfam" id="PF07650">
    <property type="entry name" value="KH_2"/>
    <property type="match status" value="1"/>
</dbReference>
<dbReference type="Pfam" id="PF01926">
    <property type="entry name" value="MMR_HSR1"/>
    <property type="match status" value="1"/>
</dbReference>
<dbReference type="SUPFAM" id="SSF52540">
    <property type="entry name" value="P-loop containing nucleoside triphosphate hydrolases"/>
    <property type="match status" value="1"/>
</dbReference>
<dbReference type="SUPFAM" id="SSF54814">
    <property type="entry name" value="Prokaryotic type KH domain (KH-domain type II)"/>
    <property type="match status" value="1"/>
</dbReference>
<dbReference type="PROSITE" id="PS51713">
    <property type="entry name" value="G_ERA"/>
    <property type="match status" value="1"/>
</dbReference>
<dbReference type="PROSITE" id="PS50823">
    <property type="entry name" value="KH_TYPE_2"/>
    <property type="match status" value="1"/>
</dbReference>
<organism>
    <name type="scientific">Campylobacter jejuni subsp. doylei (strain ATCC BAA-1458 / RM4099 / 269.97)</name>
    <dbReference type="NCBI Taxonomy" id="360109"/>
    <lineage>
        <taxon>Bacteria</taxon>
        <taxon>Pseudomonadati</taxon>
        <taxon>Campylobacterota</taxon>
        <taxon>Epsilonproteobacteria</taxon>
        <taxon>Campylobacterales</taxon>
        <taxon>Campylobacteraceae</taxon>
        <taxon>Campylobacter</taxon>
    </lineage>
</organism>